<comment type="function">
    <text evidence="1">Binds to 23S rRNA. Forms part of two intersubunit bridges in the 70S ribosome.</text>
</comment>
<comment type="subunit">
    <text evidence="1">Part of the 50S ribosomal subunit. Forms a cluster with proteins L3 and L19. In the 70S ribosome, L14 and L19 interact and together make contacts with the 16S rRNA in bridges B5 and B8.</text>
</comment>
<comment type="similarity">
    <text evidence="1">Belongs to the universal ribosomal protein uL14 family.</text>
</comment>
<name>RL14_PSYCK</name>
<gene>
    <name evidence="1" type="primary">rplN</name>
    <name type="ordered locus">Pcryo_0494</name>
</gene>
<proteinExistence type="inferred from homology"/>
<sequence>MIQVESMLEVADNSGARRVQCIKVLGGSHRRYASVGDIIKVTVKEAIPRGRVKKGDVMNAVVVRTKKGVRRPDGSVLRFDDNAAVLLNQNKAPIATRIFGPVTRELRGDQFMKIVSLAPEVL</sequence>
<accession>Q1QDH6</accession>
<protein>
    <recommendedName>
        <fullName evidence="1">Large ribosomal subunit protein uL14</fullName>
    </recommendedName>
    <alternativeName>
        <fullName evidence="2">50S ribosomal protein L14</fullName>
    </alternativeName>
</protein>
<organism>
    <name type="scientific">Psychrobacter cryohalolentis (strain ATCC BAA-1226 / DSM 17306 / VKM B-2378 / K5)</name>
    <dbReference type="NCBI Taxonomy" id="335284"/>
    <lineage>
        <taxon>Bacteria</taxon>
        <taxon>Pseudomonadati</taxon>
        <taxon>Pseudomonadota</taxon>
        <taxon>Gammaproteobacteria</taxon>
        <taxon>Moraxellales</taxon>
        <taxon>Moraxellaceae</taxon>
        <taxon>Psychrobacter</taxon>
    </lineage>
</organism>
<keyword id="KW-0687">Ribonucleoprotein</keyword>
<keyword id="KW-0689">Ribosomal protein</keyword>
<keyword id="KW-0694">RNA-binding</keyword>
<keyword id="KW-0699">rRNA-binding</keyword>
<reference key="1">
    <citation type="submission" date="2006-03" db="EMBL/GenBank/DDBJ databases">
        <title>Complete sequence of chromosome of Psychrobacter cryohalolentis K5.</title>
        <authorList>
            <consortium name="US DOE Joint Genome Institute"/>
            <person name="Copeland A."/>
            <person name="Lucas S."/>
            <person name="Lapidus A."/>
            <person name="Barry K."/>
            <person name="Detter J.C."/>
            <person name="Glavina T."/>
            <person name="Hammon N."/>
            <person name="Israni S."/>
            <person name="Dalin E."/>
            <person name="Tice H."/>
            <person name="Pitluck S."/>
            <person name="Brettin T."/>
            <person name="Bruce D."/>
            <person name="Han C."/>
            <person name="Tapia R."/>
            <person name="Sims D.R."/>
            <person name="Gilna P."/>
            <person name="Schmutz J."/>
            <person name="Larimer F."/>
            <person name="Land M."/>
            <person name="Hauser L."/>
            <person name="Kyrpides N."/>
            <person name="Kim E."/>
            <person name="Richardson P."/>
        </authorList>
    </citation>
    <scope>NUCLEOTIDE SEQUENCE [LARGE SCALE GENOMIC DNA]</scope>
    <source>
        <strain>ATCC BAA-1226 / DSM 17306 / VKM B-2378 / K5</strain>
    </source>
</reference>
<feature type="chain" id="PRO_0000266533" description="Large ribosomal subunit protein uL14">
    <location>
        <begin position="1"/>
        <end position="122"/>
    </location>
</feature>
<dbReference type="EMBL" id="CP000323">
    <property type="protein sequence ID" value="ABE74277.1"/>
    <property type="molecule type" value="Genomic_DNA"/>
</dbReference>
<dbReference type="RefSeq" id="WP_010196702.1">
    <property type="nucleotide sequence ID" value="NC_007969.1"/>
</dbReference>
<dbReference type="SMR" id="Q1QDH6"/>
<dbReference type="STRING" id="335284.Pcryo_0494"/>
<dbReference type="GeneID" id="60255477"/>
<dbReference type="KEGG" id="pcr:Pcryo_0494"/>
<dbReference type="eggNOG" id="COG0093">
    <property type="taxonomic scope" value="Bacteria"/>
</dbReference>
<dbReference type="HOGENOM" id="CLU_095071_2_1_6"/>
<dbReference type="Proteomes" id="UP000002425">
    <property type="component" value="Chromosome"/>
</dbReference>
<dbReference type="GO" id="GO:0022625">
    <property type="term" value="C:cytosolic large ribosomal subunit"/>
    <property type="evidence" value="ECO:0007669"/>
    <property type="project" value="TreeGrafter"/>
</dbReference>
<dbReference type="GO" id="GO:0070180">
    <property type="term" value="F:large ribosomal subunit rRNA binding"/>
    <property type="evidence" value="ECO:0007669"/>
    <property type="project" value="TreeGrafter"/>
</dbReference>
<dbReference type="GO" id="GO:0003735">
    <property type="term" value="F:structural constituent of ribosome"/>
    <property type="evidence" value="ECO:0007669"/>
    <property type="project" value="InterPro"/>
</dbReference>
<dbReference type="GO" id="GO:0006412">
    <property type="term" value="P:translation"/>
    <property type="evidence" value="ECO:0007669"/>
    <property type="project" value="UniProtKB-UniRule"/>
</dbReference>
<dbReference type="CDD" id="cd00337">
    <property type="entry name" value="Ribosomal_uL14"/>
    <property type="match status" value="1"/>
</dbReference>
<dbReference type="FunFam" id="2.40.150.20:FF:000001">
    <property type="entry name" value="50S ribosomal protein L14"/>
    <property type="match status" value="1"/>
</dbReference>
<dbReference type="Gene3D" id="2.40.150.20">
    <property type="entry name" value="Ribosomal protein L14"/>
    <property type="match status" value="1"/>
</dbReference>
<dbReference type="HAMAP" id="MF_01367">
    <property type="entry name" value="Ribosomal_uL14"/>
    <property type="match status" value="1"/>
</dbReference>
<dbReference type="InterPro" id="IPR000218">
    <property type="entry name" value="Ribosomal_uL14"/>
</dbReference>
<dbReference type="InterPro" id="IPR005745">
    <property type="entry name" value="Ribosomal_uL14_bac-type"/>
</dbReference>
<dbReference type="InterPro" id="IPR019972">
    <property type="entry name" value="Ribosomal_uL14_CS"/>
</dbReference>
<dbReference type="InterPro" id="IPR036853">
    <property type="entry name" value="Ribosomal_uL14_sf"/>
</dbReference>
<dbReference type="NCBIfam" id="TIGR01067">
    <property type="entry name" value="rplN_bact"/>
    <property type="match status" value="1"/>
</dbReference>
<dbReference type="PANTHER" id="PTHR11761">
    <property type="entry name" value="50S/60S RIBOSOMAL PROTEIN L14/L23"/>
    <property type="match status" value="1"/>
</dbReference>
<dbReference type="PANTHER" id="PTHR11761:SF3">
    <property type="entry name" value="LARGE RIBOSOMAL SUBUNIT PROTEIN UL14M"/>
    <property type="match status" value="1"/>
</dbReference>
<dbReference type="Pfam" id="PF00238">
    <property type="entry name" value="Ribosomal_L14"/>
    <property type="match status" value="1"/>
</dbReference>
<dbReference type="SMART" id="SM01374">
    <property type="entry name" value="Ribosomal_L14"/>
    <property type="match status" value="1"/>
</dbReference>
<dbReference type="SUPFAM" id="SSF50193">
    <property type="entry name" value="Ribosomal protein L14"/>
    <property type="match status" value="1"/>
</dbReference>
<dbReference type="PROSITE" id="PS00049">
    <property type="entry name" value="RIBOSOMAL_L14"/>
    <property type="match status" value="1"/>
</dbReference>
<evidence type="ECO:0000255" key="1">
    <source>
        <dbReference type="HAMAP-Rule" id="MF_01367"/>
    </source>
</evidence>
<evidence type="ECO:0000305" key="2"/>